<organism>
    <name type="scientific">Thermoanaerobacter sp. (strain X514)</name>
    <dbReference type="NCBI Taxonomy" id="399726"/>
    <lineage>
        <taxon>Bacteria</taxon>
        <taxon>Bacillati</taxon>
        <taxon>Bacillota</taxon>
        <taxon>Clostridia</taxon>
        <taxon>Thermoanaerobacterales</taxon>
        <taxon>Thermoanaerobacteraceae</taxon>
        <taxon>Thermoanaerobacter</taxon>
    </lineage>
</organism>
<dbReference type="EMBL" id="CP000923">
    <property type="protein sequence ID" value="ABY93325.1"/>
    <property type="molecule type" value="Genomic_DNA"/>
</dbReference>
<dbReference type="RefSeq" id="WP_003867239.1">
    <property type="nucleotide sequence ID" value="NC_010320.1"/>
</dbReference>
<dbReference type="SMR" id="B0K3V4"/>
<dbReference type="KEGG" id="tex:Teth514_2053"/>
<dbReference type="HOGENOM" id="CLU_169643_4_3_9"/>
<dbReference type="Proteomes" id="UP000002155">
    <property type="component" value="Chromosome"/>
</dbReference>
<dbReference type="GO" id="GO:0022625">
    <property type="term" value="C:cytosolic large ribosomal subunit"/>
    <property type="evidence" value="ECO:0007669"/>
    <property type="project" value="TreeGrafter"/>
</dbReference>
<dbReference type="GO" id="GO:0003735">
    <property type="term" value="F:structural constituent of ribosome"/>
    <property type="evidence" value="ECO:0007669"/>
    <property type="project" value="InterPro"/>
</dbReference>
<dbReference type="GO" id="GO:0006412">
    <property type="term" value="P:translation"/>
    <property type="evidence" value="ECO:0007669"/>
    <property type="project" value="UniProtKB-UniRule"/>
</dbReference>
<dbReference type="FunFam" id="4.10.410.60:FF:000001">
    <property type="entry name" value="50S ribosomal protein L35"/>
    <property type="match status" value="1"/>
</dbReference>
<dbReference type="Gene3D" id="4.10.410.60">
    <property type="match status" value="1"/>
</dbReference>
<dbReference type="HAMAP" id="MF_00514">
    <property type="entry name" value="Ribosomal_bL35"/>
    <property type="match status" value="1"/>
</dbReference>
<dbReference type="InterPro" id="IPR001706">
    <property type="entry name" value="Ribosomal_bL35"/>
</dbReference>
<dbReference type="InterPro" id="IPR021137">
    <property type="entry name" value="Ribosomal_bL35-like"/>
</dbReference>
<dbReference type="InterPro" id="IPR018265">
    <property type="entry name" value="Ribosomal_bL35_CS"/>
</dbReference>
<dbReference type="InterPro" id="IPR037229">
    <property type="entry name" value="Ribosomal_bL35_sf"/>
</dbReference>
<dbReference type="NCBIfam" id="TIGR00001">
    <property type="entry name" value="rpmI_bact"/>
    <property type="match status" value="1"/>
</dbReference>
<dbReference type="PANTHER" id="PTHR33343">
    <property type="entry name" value="54S RIBOSOMAL PROTEIN BL35M"/>
    <property type="match status" value="1"/>
</dbReference>
<dbReference type="PANTHER" id="PTHR33343:SF1">
    <property type="entry name" value="LARGE RIBOSOMAL SUBUNIT PROTEIN BL35M"/>
    <property type="match status" value="1"/>
</dbReference>
<dbReference type="Pfam" id="PF01632">
    <property type="entry name" value="Ribosomal_L35p"/>
    <property type="match status" value="1"/>
</dbReference>
<dbReference type="PRINTS" id="PR00064">
    <property type="entry name" value="RIBOSOMALL35"/>
</dbReference>
<dbReference type="SUPFAM" id="SSF143034">
    <property type="entry name" value="L35p-like"/>
    <property type="match status" value="1"/>
</dbReference>
<dbReference type="PROSITE" id="PS00936">
    <property type="entry name" value="RIBOSOMAL_L35"/>
    <property type="match status" value="1"/>
</dbReference>
<feature type="chain" id="PRO_1000127420" description="Large ribosomal subunit protein bL35">
    <location>
        <begin position="1"/>
        <end position="65"/>
    </location>
</feature>
<sequence length="65" mass="7575">MPKMKTHRGAAKRFKVLKSGKVKRSKAYKSHLLTHKNAKRKRRLRKATYLVGGDAKNIRRLLPYS</sequence>
<protein>
    <recommendedName>
        <fullName evidence="1">Large ribosomal subunit protein bL35</fullName>
    </recommendedName>
    <alternativeName>
        <fullName evidence="2">50S ribosomal protein L35</fullName>
    </alternativeName>
</protein>
<keyword id="KW-0687">Ribonucleoprotein</keyword>
<keyword id="KW-0689">Ribosomal protein</keyword>
<reference key="1">
    <citation type="submission" date="2008-01" db="EMBL/GenBank/DDBJ databases">
        <title>Complete sequence of Thermoanaerobacter sp. X514.</title>
        <authorList>
            <consortium name="US DOE Joint Genome Institute"/>
            <person name="Copeland A."/>
            <person name="Lucas S."/>
            <person name="Lapidus A."/>
            <person name="Barry K."/>
            <person name="Glavina del Rio T."/>
            <person name="Dalin E."/>
            <person name="Tice H."/>
            <person name="Pitluck S."/>
            <person name="Bruce D."/>
            <person name="Goodwin L."/>
            <person name="Saunders E."/>
            <person name="Brettin T."/>
            <person name="Detter J.C."/>
            <person name="Han C."/>
            <person name="Schmutz J."/>
            <person name="Larimer F."/>
            <person name="Land M."/>
            <person name="Hauser L."/>
            <person name="Kyrpides N."/>
            <person name="Kim E."/>
            <person name="Hemme C."/>
            <person name="Fields M.W."/>
            <person name="He Z."/>
            <person name="Zhou J."/>
            <person name="Richardson P."/>
        </authorList>
    </citation>
    <scope>NUCLEOTIDE SEQUENCE [LARGE SCALE GENOMIC DNA]</scope>
    <source>
        <strain>X514</strain>
    </source>
</reference>
<proteinExistence type="inferred from homology"/>
<name>RL35_THEPX</name>
<comment type="similarity">
    <text evidence="1">Belongs to the bacterial ribosomal protein bL35 family.</text>
</comment>
<gene>
    <name evidence="1" type="primary">rpmI</name>
    <name type="ordered locus">Teth514_2053</name>
</gene>
<evidence type="ECO:0000255" key="1">
    <source>
        <dbReference type="HAMAP-Rule" id="MF_00514"/>
    </source>
</evidence>
<evidence type="ECO:0000305" key="2"/>
<accession>B0K3V4</accession>